<accession>Q87SU2</accession>
<reference key="1">
    <citation type="journal article" date="2003" name="Lancet">
        <title>Genome sequence of Vibrio parahaemolyticus: a pathogenic mechanism distinct from that of V. cholerae.</title>
        <authorList>
            <person name="Makino K."/>
            <person name="Oshima K."/>
            <person name="Kurokawa K."/>
            <person name="Yokoyama K."/>
            <person name="Uda T."/>
            <person name="Tagomori K."/>
            <person name="Iijima Y."/>
            <person name="Najima M."/>
            <person name="Nakano M."/>
            <person name="Yamashita A."/>
            <person name="Kubota Y."/>
            <person name="Kimura S."/>
            <person name="Yasunaga T."/>
            <person name="Honda T."/>
            <person name="Shinagawa H."/>
            <person name="Hattori M."/>
            <person name="Iida T."/>
        </authorList>
    </citation>
    <scope>NUCLEOTIDE SEQUENCE [LARGE SCALE GENOMIC DNA]</scope>
    <source>
        <strain>RIMD 2210633</strain>
    </source>
</reference>
<protein>
    <recommendedName>
        <fullName evidence="1">GTPase Obg</fullName>
        <ecNumber evidence="1">3.6.5.-</ecNumber>
    </recommendedName>
    <alternativeName>
        <fullName evidence="1">GTP-binding protein Obg</fullName>
    </alternativeName>
</protein>
<feature type="chain" id="PRO_0000386382" description="GTPase Obg">
    <location>
        <begin position="1"/>
        <end position="390"/>
    </location>
</feature>
<feature type="domain" description="Obg" evidence="2">
    <location>
        <begin position="1"/>
        <end position="159"/>
    </location>
</feature>
<feature type="domain" description="OBG-type G" evidence="1">
    <location>
        <begin position="160"/>
        <end position="333"/>
    </location>
</feature>
<feature type="region of interest" description="Disordered" evidence="3">
    <location>
        <begin position="367"/>
        <end position="390"/>
    </location>
</feature>
<feature type="compositionally biased region" description="Acidic residues" evidence="3">
    <location>
        <begin position="367"/>
        <end position="382"/>
    </location>
</feature>
<feature type="binding site" evidence="1">
    <location>
        <begin position="166"/>
        <end position="173"/>
    </location>
    <ligand>
        <name>GTP</name>
        <dbReference type="ChEBI" id="CHEBI:37565"/>
    </ligand>
</feature>
<feature type="binding site" evidence="1">
    <location>
        <position position="173"/>
    </location>
    <ligand>
        <name>Mg(2+)</name>
        <dbReference type="ChEBI" id="CHEBI:18420"/>
    </ligand>
</feature>
<feature type="binding site" evidence="1">
    <location>
        <begin position="191"/>
        <end position="195"/>
    </location>
    <ligand>
        <name>GTP</name>
        <dbReference type="ChEBI" id="CHEBI:37565"/>
    </ligand>
</feature>
<feature type="binding site" evidence="1">
    <location>
        <position position="193"/>
    </location>
    <ligand>
        <name>Mg(2+)</name>
        <dbReference type="ChEBI" id="CHEBI:18420"/>
    </ligand>
</feature>
<feature type="binding site" evidence="1">
    <location>
        <begin position="213"/>
        <end position="216"/>
    </location>
    <ligand>
        <name>GTP</name>
        <dbReference type="ChEBI" id="CHEBI:37565"/>
    </ligand>
</feature>
<feature type="binding site" evidence="1">
    <location>
        <begin position="283"/>
        <end position="286"/>
    </location>
    <ligand>
        <name>GTP</name>
        <dbReference type="ChEBI" id="CHEBI:37565"/>
    </ligand>
</feature>
<feature type="binding site" evidence="1">
    <location>
        <begin position="314"/>
        <end position="316"/>
    </location>
    <ligand>
        <name>GTP</name>
        <dbReference type="ChEBI" id="CHEBI:37565"/>
    </ligand>
</feature>
<dbReference type="EC" id="3.6.5.-" evidence="1"/>
<dbReference type="EMBL" id="BA000031">
    <property type="protein sequence ID" value="BAC58593.1"/>
    <property type="molecule type" value="Genomic_DNA"/>
</dbReference>
<dbReference type="RefSeq" id="NP_796709.1">
    <property type="nucleotide sequence ID" value="NC_004603.1"/>
</dbReference>
<dbReference type="SMR" id="Q87SU2"/>
<dbReference type="GeneID" id="1187797"/>
<dbReference type="KEGG" id="vpa:VP0330"/>
<dbReference type="PATRIC" id="fig|223926.6.peg.317"/>
<dbReference type="eggNOG" id="COG0536">
    <property type="taxonomic scope" value="Bacteria"/>
</dbReference>
<dbReference type="HOGENOM" id="CLU_011747_2_0_6"/>
<dbReference type="Proteomes" id="UP000002493">
    <property type="component" value="Chromosome 1"/>
</dbReference>
<dbReference type="GO" id="GO:0005737">
    <property type="term" value="C:cytoplasm"/>
    <property type="evidence" value="ECO:0007669"/>
    <property type="project" value="UniProtKB-SubCell"/>
</dbReference>
<dbReference type="GO" id="GO:0005525">
    <property type="term" value="F:GTP binding"/>
    <property type="evidence" value="ECO:0007669"/>
    <property type="project" value="UniProtKB-UniRule"/>
</dbReference>
<dbReference type="GO" id="GO:0003924">
    <property type="term" value="F:GTPase activity"/>
    <property type="evidence" value="ECO:0007669"/>
    <property type="project" value="UniProtKB-UniRule"/>
</dbReference>
<dbReference type="GO" id="GO:0000287">
    <property type="term" value="F:magnesium ion binding"/>
    <property type="evidence" value="ECO:0007669"/>
    <property type="project" value="InterPro"/>
</dbReference>
<dbReference type="GO" id="GO:0042254">
    <property type="term" value="P:ribosome biogenesis"/>
    <property type="evidence" value="ECO:0007669"/>
    <property type="project" value="UniProtKB-UniRule"/>
</dbReference>
<dbReference type="CDD" id="cd01898">
    <property type="entry name" value="Obg"/>
    <property type="match status" value="1"/>
</dbReference>
<dbReference type="FunFam" id="2.70.210.12:FF:000001">
    <property type="entry name" value="GTPase Obg"/>
    <property type="match status" value="1"/>
</dbReference>
<dbReference type="FunFam" id="3.40.50.300:FF:000185">
    <property type="entry name" value="GTPase Obg"/>
    <property type="match status" value="1"/>
</dbReference>
<dbReference type="Gene3D" id="2.70.210.12">
    <property type="entry name" value="GTP1/OBG domain"/>
    <property type="match status" value="1"/>
</dbReference>
<dbReference type="Gene3D" id="3.40.50.300">
    <property type="entry name" value="P-loop containing nucleotide triphosphate hydrolases"/>
    <property type="match status" value="1"/>
</dbReference>
<dbReference type="HAMAP" id="MF_01454">
    <property type="entry name" value="GTPase_Obg"/>
    <property type="match status" value="1"/>
</dbReference>
<dbReference type="InterPro" id="IPR031167">
    <property type="entry name" value="G_OBG"/>
</dbReference>
<dbReference type="InterPro" id="IPR006073">
    <property type="entry name" value="GTP-bd"/>
</dbReference>
<dbReference type="InterPro" id="IPR014100">
    <property type="entry name" value="GTP-bd_Obg/CgtA"/>
</dbReference>
<dbReference type="InterPro" id="IPR006074">
    <property type="entry name" value="GTP1-OBG_CS"/>
</dbReference>
<dbReference type="InterPro" id="IPR006169">
    <property type="entry name" value="GTP1_OBG_dom"/>
</dbReference>
<dbReference type="InterPro" id="IPR036726">
    <property type="entry name" value="GTP1_OBG_dom_sf"/>
</dbReference>
<dbReference type="InterPro" id="IPR045086">
    <property type="entry name" value="OBG_GTPase"/>
</dbReference>
<dbReference type="InterPro" id="IPR027417">
    <property type="entry name" value="P-loop_NTPase"/>
</dbReference>
<dbReference type="NCBIfam" id="TIGR02729">
    <property type="entry name" value="Obg_CgtA"/>
    <property type="match status" value="1"/>
</dbReference>
<dbReference type="NCBIfam" id="NF008955">
    <property type="entry name" value="PRK12297.1"/>
    <property type="match status" value="1"/>
</dbReference>
<dbReference type="NCBIfam" id="NF008956">
    <property type="entry name" value="PRK12299.1"/>
    <property type="match status" value="1"/>
</dbReference>
<dbReference type="PANTHER" id="PTHR11702">
    <property type="entry name" value="DEVELOPMENTALLY REGULATED GTP-BINDING PROTEIN-RELATED"/>
    <property type="match status" value="1"/>
</dbReference>
<dbReference type="PANTHER" id="PTHR11702:SF31">
    <property type="entry name" value="MITOCHONDRIAL RIBOSOME-ASSOCIATED GTPASE 2"/>
    <property type="match status" value="1"/>
</dbReference>
<dbReference type="Pfam" id="PF01018">
    <property type="entry name" value="GTP1_OBG"/>
    <property type="match status" value="1"/>
</dbReference>
<dbReference type="Pfam" id="PF01926">
    <property type="entry name" value="MMR_HSR1"/>
    <property type="match status" value="1"/>
</dbReference>
<dbReference type="PIRSF" id="PIRSF002401">
    <property type="entry name" value="GTP_bd_Obg/CgtA"/>
    <property type="match status" value="1"/>
</dbReference>
<dbReference type="PRINTS" id="PR00326">
    <property type="entry name" value="GTP1OBG"/>
</dbReference>
<dbReference type="SUPFAM" id="SSF82051">
    <property type="entry name" value="Obg GTP-binding protein N-terminal domain"/>
    <property type="match status" value="1"/>
</dbReference>
<dbReference type="SUPFAM" id="SSF52540">
    <property type="entry name" value="P-loop containing nucleoside triphosphate hydrolases"/>
    <property type="match status" value="1"/>
</dbReference>
<dbReference type="PROSITE" id="PS51710">
    <property type="entry name" value="G_OBG"/>
    <property type="match status" value="1"/>
</dbReference>
<dbReference type="PROSITE" id="PS00905">
    <property type="entry name" value="GTP1_OBG"/>
    <property type="match status" value="1"/>
</dbReference>
<dbReference type="PROSITE" id="PS51883">
    <property type="entry name" value="OBG"/>
    <property type="match status" value="1"/>
</dbReference>
<name>OBG_VIBPA</name>
<keyword id="KW-0963">Cytoplasm</keyword>
<keyword id="KW-0342">GTP-binding</keyword>
<keyword id="KW-0378">Hydrolase</keyword>
<keyword id="KW-0460">Magnesium</keyword>
<keyword id="KW-0479">Metal-binding</keyword>
<keyword id="KW-0547">Nucleotide-binding</keyword>
<comment type="function">
    <text evidence="1">An essential GTPase which binds GTP, GDP and possibly (p)ppGpp with moderate affinity, with high nucleotide exchange rates and a fairly low GTP hydrolysis rate. Plays a role in control of the cell cycle, stress response, ribosome biogenesis and in those bacteria that undergo differentiation, in morphogenesis control.</text>
</comment>
<comment type="cofactor">
    <cofactor evidence="1">
        <name>Mg(2+)</name>
        <dbReference type="ChEBI" id="CHEBI:18420"/>
    </cofactor>
</comment>
<comment type="subunit">
    <text evidence="1">Monomer.</text>
</comment>
<comment type="subcellular location">
    <subcellularLocation>
        <location evidence="1">Cytoplasm</location>
    </subcellularLocation>
</comment>
<comment type="similarity">
    <text evidence="1">Belongs to the TRAFAC class OBG-HflX-like GTPase superfamily. OBG GTPase family.</text>
</comment>
<organism>
    <name type="scientific">Vibrio parahaemolyticus serotype O3:K6 (strain RIMD 2210633)</name>
    <dbReference type="NCBI Taxonomy" id="223926"/>
    <lineage>
        <taxon>Bacteria</taxon>
        <taxon>Pseudomonadati</taxon>
        <taxon>Pseudomonadota</taxon>
        <taxon>Gammaproteobacteria</taxon>
        <taxon>Vibrionales</taxon>
        <taxon>Vibrionaceae</taxon>
        <taxon>Vibrio</taxon>
    </lineage>
</organism>
<gene>
    <name evidence="1" type="primary">obg</name>
    <name type="ordered locus">VP0330</name>
</gene>
<evidence type="ECO:0000255" key="1">
    <source>
        <dbReference type="HAMAP-Rule" id="MF_01454"/>
    </source>
</evidence>
<evidence type="ECO:0000255" key="2">
    <source>
        <dbReference type="PROSITE-ProRule" id="PRU01231"/>
    </source>
</evidence>
<evidence type="ECO:0000256" key="3">
    <source>
        <dbReference type="SAM" id="MobiDB-lite"/>
    </source>
</evidence>
<sequence length="390" mass="43376">MKFVDEAVVKVQAGDGGSGVVSFWREKFITKGGPDGGDGGDGGDVYIQADENLNTLIDYRFQRFYEAERGENGRGGNCTGKRGKDIVLRVPVGTRAVDIHTNEIVAEVAEHGKKVMVAKGGWHGLGNTRFKSSVNRAPRQRTLGTKGEIREIRLELLLLADVGMLGLPNAGKSTFIRAVSAAKPKVADYPFTTLIPSLGVVSVVPEKSFVVADIPGLIEGAADGAGLGIRFLKHLERCRVLLHMIDIMPIDQSDPVQNALTIIDELEQYSEKLASKPRWLVFNKVDLMPEEEANEKIQEILDALGWEDEYFKISAINRSGTKELCYKLADFMENLPREEEEVAEEDKVNFMWDDYHKDAMAGKDVVTEDDDDWDDWDDEEDDGHVVYVRD</sequence>
<proteinExistence type="inferred from homology"/>